<accession>Q38UR2</accession>
<dbReference type="EMBL" id="CR936503">
    <property type="protein sequence ID" value="CAI56072.1"/>
    <property type="molecule type" value="Genomic_DNA"/>
</dbReference>
<dbReference type="RefSeq" id="WP_011375449.1">
    <property type="nucleotide sequence ID" value="NC_007576.1"/>
</dbReference>
<dbReference type="SMR" id="Q38UR2"/>
<dbReference type="STRING" id="314315.LCA_1764"/>
<dbReference type="GeneID" id="57132681"/>
<dbReference type="KEGG" id="lsa:LCA_1764"/>
<dbReference type="eggNOG" id="COG0087">
    <property type="taxonomic scope" value="Bacteria"/>
</dbReference>
<dbReference type="HOGENOM" id="CLU_044142_4_1_9"/>
<dbReference type="OrthoDB" id="9806135at2"/>
<dbReference type="Proteomes" id="UP000002707">
    <property type="component" value="Chromosome"/>
</dbReference>
<dbReference type="GO" id="GO:0022625">
    <property type="term" value="C:cytosolic large ribosomal subunit"/>
    <property type="evidence" value="ECO:0007669"/>
    <property type="project" value="TreeGrafter"/>
</dbReference>
<dbReference type="GO" id="GO:0019843">
    <property type="term" value="F:rRNA binding"/>
    <property type="evidence" value="ECO:0007669"/>
    <property type="project" value="UniProtKB-UniRule"/>
</dbReference>
<dbReference type="GO" id="GO:0003735">
    <property type="term" value="F:structural constituent of ribosome"/>
    <property type="evidence" value="ECO:0007669"/>
    <property type="project" value="InterPro"/>
</dbReference>
<dbReference type="GO" id="GO:0006412">
    <property type="term" value="P:translation"/>
    <property type="evidence" value="ECO:0007669"/>
    <property type="project" value="UniProtKB-UniRule"/>
</dbReference>
<dbReference type="FunFam" id="2.40.30.10:FF:000004">
    <property type="entry name" value="50S ribosomal protein L3"/>
    <property type="match status" value="1"/>
</dbReference>
<dbReference type="FunFam" id="3.30.160.810:FF:000002">
    <property type="entry name" value="50S ribosomal protein L3"/>
    <property type="match status" value="1"/>
</dbReference>
<dbReference type="Gene3D" id="3.30.160.810">
    <property type="match status" value="1"/>
</dbReference>
<dbReference type="Gene3D" id="2.40.30.10">
    <property type="entry name" value="Translation factors"/>
    <property type="match status" value="1"/>
</dbReference>
<dbReference type="HAMAP" id="MF_01325_B">
    <property type="entry name" value="Ribosomal_uL3_B"/>
    <property type="match status" value="1"/>
</dbReference>
<dbReference type="InterPro" id="IPR000597">
    <property type="entry name" value="Ribosomal_uL3"/>
</dbReference>
<dbReference type="InterPro" id="IPR019927">
    <property type="entry name" value="Ribosomal_uL3_bac/org-type"/>
</dbReference>
<dbReference type="InterPro" id="IPR009000">
    <property type="entry name" value="Transl_B-barrel_sf"/>
</dbReference>
<dbReference type="NCBIfam" id="TIGR03625">
    <property type="entry name" value="L3_bact"/>
    <property type="match status" value="1"/>
</dbReference>
<dbReference type="PANTHER" id="PTHR11229">
    <property type="entry name" value="50S RIBOSOMAL PROTEIN L3"/>
    <property type="match status" value="1"/>
</dbReference>
<dbReference type="PANTHER" id="PTHR11229:SF16">
    <property type="entry name" value="LARGE RIBOSOMAL SUBUNIT PROTEIN UL3C"/>
    <property type="match status" value="1"/>
</dbReference>
<dbReference type="Pfam" id="PF00297">
    <property type="entry name" value="Ribosomal_L3"/>
    <property type="match status" value="1"/>
</dbReference>
<dbReference type="SUPFAM" id="SSF50447">
    <property type="entry name" value="Translation proteins"/>
    <property type="match status" value="1"/>
</dbReference>
<name>RL3_LATSS</name>
<evidence type="ECO:0000255" key="1">
    <source>
        <dbReference type="HAMAP-Rule" id="MF_01325"/>
    </source>
</evidence>
<evidence type="ECO:0000256" key="2">
    <source>
        <dbReference type="SAM" id="MobiDB-lite"/>
    </source>
</evidence>
<evidence type="ECO:0000305" key="3"/>
<proteinExistence type="inferred from homology"/>
<reference key="1">
    <citation type="journal article" date="2005" name="Nat. Biotechnol.">
        <title>The complete genome sequence of the meat-borne lactic acid bacterium Lactobacillus sakei 23K.</title>
        <authorList>
            <person name="Chaillou S."/>
            <person name="Champomier-Verges M.-C."/>
            <person name="Cornet M."/>
            <person name="Crutz-Le Coq A.-M."/>
            <person name="Dudez A.-M."/>
            <person name="Martin V."/>
            <person name="Beaufils S."/>
            <person name="Darbon-Rongere E."/>
            <person name="Bossy R."/>
            <person name="Loux V."/>
            <person name="Zagorec M."/>
        </authorList>
    </citation>
    <scope>NUCLEOTIDE SEQUENCE [LARGE SCALE GENOMIC DNA]</scope>
    <source>
        <strain>23K</strain>
    </source>
</reference>
<feature type="chain" id="PRO_0000241357" description="Large ribosomal subunit protein uL3">
    <location>
        <begin position="1"/>
        <end position="210"/>
    </location>
</feature>
<feature type="region of interest" description="Disordered" evidence="2">
    <location>
        <begin position="120"/>
        <end position="143"/>
    </location>
</feature>
<comment type="function">
    <text evidence="1">One of the primary rRNA binding proteins, it binds directly near the 3'-end of the 23S rRNA, where it nucleates assembly of the 50S subunit.</text>
</comment>
<comment type="subunit">
    <text evidence="1">Part of the 50S ribosomal subunit. Forms a cluster with proteins L14 and L19.</text>
</comment>
<comment type="similarity">
    <text evidence="1">Belongs to the universal ribosomal protein uL3 family.</text>
</comment>
<gene>
    <name evidence="1" type="primary">rplC</name>
    <name type="ordered locus">LCA_1764</name>
</gene>
<keyword id="KW-1185">Reference proteome</keyword>
<keyword id="KW-0687">Ribonucleoprotein</keyword>
<keyword id="KW-0689">Ribosomal protein</keyword>
<keyword id="KW-0694">RNA-binding</keyword>
<keyword id="KW-0699">rRNA-binding</keyword>
<protein>
    <recommendedName>
        <fullName evidence="1">Large ribosomal subunit protein uL3</fullName>
    </recommendedName>
    <alternativeName>
        <fullName evidence="3">50S ribosomal protein L3</fullName>
    </alternativeName>
</protein>
<sequence>MTTKGILGRKVGMTQVFTENGELIPVTVIAATPNVVLQVKTNETDGYEAIQVGFEDKREVLSNKPAKGHVAKANTTPKRFIREFRDVALGDYEVGTEIKVDTFAAGDVVDVTGVTKGHGFQGNIKKDGQSRGPMGHGSRYHRRPGSMGAVINRVFKGKLLPGRMGNNQRTVQNLVVVSTDVEKNVILVKGNVPGAKNSMVTIKTAVKAHK</sequence>
<organism>
    <name type="scientific">Latilactobacillus sakei subsp. sakei (strain 23K)</name>
    <name type="common">Lactobacillus sakei subsp. sakei</name>
    <dbReference type="NCBI Taxonomy" id="314315"/>
    <lineage>
        <taxon>Bacteria</taxon>
        <taxon>Bacillati</taxon>
        <taxon>Bacillota</taxon>
        <taxon>Bacilli</taxon>
        <taxon>Lactobacillales</taxon>
        <taxon>Lactobacillaceae</taxon>
        <taxon>Latilactobacillus</taxon>
    </lineage>
</organism>